<protein>
    <recommendedName>
        <fullName evidence="1">UDP-N-acetylmuramoyl-L-alanyl-D-glutamate--2,6-diaminopimelate ligase</fullName>
        <ecNumber evidence="1">6.3.2.13</ecNumber>
    </recommendedName>
    <alternativeName>
        <fullName evidence="1">Meso-A2pm-adding enzyme</fullName>
    </alternativeName>
    <alternativeName>
        <fullName evidence="1">Meso-diaminopimelate-adding enzyme</fullName>
    </alternativeName>
    <alternativeName>
        <fullName evidence="1">UDP-MurNAc-L-Ala-D-Glu:meso-diaminopimelate ligase</fullName>
    </alternativeName>
    <alternativeName>
        <fullName evidence="1">UDP-MurNAc-tripeptide synthetase</fullName>
    </alternativeName>
    <alternativeName>
        <fullName evidence="1">UDP-N-acetylmuramyl-tripeptide synthetase</fullName>
    </alternativeName>
</protein>
<accession>Q65JY4</accession>
<accession>Q62VD5</accession>
<name>MURE_BACLD</name>
<sequence length="488" mass="53242">MKLTKLLTYLKNVPSYAGQEDPDITSIEMDSREVKTGSLFVCIKGYTVDGHDYARQAAEKGAAAIVAEREVDADVPVIIIRHTKRALAVLSDAFYGQPTKQLRLIGITGTNGKTSTSHMVEEIFRKAGSRTGLIGTMYTKIHDETFEAKNTTPESVTLQKTFRKMVDQGVDTAVMEVSSHALHMGRVHGCDYDIAAFTNLTQDHLDYHETMEEYKHAKSLLFSQLGGSFNHETPKWAVLNADDPASAYFAQVTSAHLLTYGIQNDADVMAENIKMAPKGTTFDLVTPKGSAQVTIPLVGLFNVYNVLTAAAIAIAADIPFATITEGIEGLKGVRGRFELVDAGQDFPVIVDYAHTPDSLENVLNTCRGLTEGKLFVVVGCGGDRDKTKRPKMAKIAVDLADEPVFTADNPRSENPLAILNDMEEGVKGAYYHSIVNREQAIFFAIANAKKGDVVLIAGKGHETYQQIGGQTFDFDDAEVAKRAILELK</sequence>
<feature type="chain" id="PRO_1000012339" description="UDP-N-acetylmuramoyl-L-alanyl-D-glutamate--2,6-diaminopimelate ligase">
    <location>
        <begin position="1"/>
        <end position="488"/>
    </location>
</feature>
<feature type="short sequence motif" description="Meso-diaminopimelate recognition motif">
    <location>
        <begin position="408"/>
        <end position="411"/>
    </location>
</feature>
<feature type="binding site" evidence="1">
    <location>
        <position position="31"/>
    </location>
    <ligand>
        <name>UDP-N-acetyl-alpha-D-muramoyl-L-alanyl-D-glutamate</name>
        <dbReference type="ChEBI" id="CHEBI:83900"/>
    </ligand>
</feature>
<feature type="binding site" evidence="1">
    <location>
        <begin position="109"/>
        <end position="115"/>
    </location>
    <ligand>
        <name>ATP</name>
        <dbReference type="ChEBI" id="CHEBI:30616"/>
    </ligand>
</feature>
<feature type="binding site" evidence="1">
    <location>
        <position position="150"/>
    </location>
    <ligand>
        <name>UDP-N-acetyl-alpha-D-muramoyl-L-alanyl-D-glutamate</name>
        <dbReference type="ChEBI" id="CHEBI:83900"/>
    </ligand>
</feature>
<feature type="binding site" evidence="1">
    <location>
        <begin position="151"/>
        <end position="152"/>
    </location>
    <ligand>
        <name>UDP-N-acetyl-alpha-D-muramoyl-L-alanyl-D-glutamate</name>
        <dbReference type="ChEBI" id="CHEBI:83900"/>
    </ligand>
</feature>
<feature type="binding site" evidence="1">
    <location>
        <position position="178"/>
    </location>
    <ligand>
        <name>UDP-N-acetyl-alpha-D-muramoyl-L-alanyl-D-glutamate</name>
        <dbReference type="ChEBI" id="CHEBI:83900"/>
    </ligand>
</feature>
<feature type="binding site" evidence="1">
    <location>
        <position position="186"/>
    </location>
    <ligand>
        <name>UDP-N-acetyl-alpha-D-muramoyl-L-alanyl-D-glutamate</name>
        <dbReference type="ChEBI" id="CHEBI:83900"/>
    </ligand>
</feature>
<feature type="binding site" evidence="1">
    <location>
        <position position="384"/>
    </location>
    <ligand>
        <name>meso-2,6-diaminopimelate</name>
        <dbReference type="ChEBI" id="CHEBI:57791"/>
    </ligand>
</feature>
<feature type="binding site" evidence="1">
    <location>
        <begin position="408"/>
        <end position="411"/>
    </location>
    <ligand>
        <name>meso-2,6-diaminopimelate</name>
        <dbReference type="ChEBI" id="CHEBI:57791"/>
    </ligand>
</feature>
<feature type="binding site" evidence="1">
    <location>
        <position position="458"/>
    </location>
    <ligand>
        <name>meso-2,6-diaminopimelate</name>
        <dbReference type="ChEBI" id="CHEBI:57791"/>
    </ligand>
</feature>
<feature type="binding site" evidence="1">
    <location>
        <position position="462"/>
    </location>
    <ligand>
        <name>meso-2,6-diaminopimelate</name>
        <dbReference type="ChEBI" id="CHEBI:57791"/>
    </ligand>
</feature>
<feature type="modified residue" description="N6-carboxylysine" evidence="1">
    <location>
        <position position="218"/>
    </location>
</feature>
<comment type="function">
    <text evidence="1">Catalyzes the addition of meso-diaminopimelic acid to the nucleotide precursor UDP-N-acetylmuramoyl-L-alanyl-D-glutamate (UMAG) in the biosynthesis of bacterial cell-wall peptidoglycan.</text>
</comment>
<comment type="catalytic activity">
    <reaction evidence="1">
        <text>UDP-N-acetyl-alpha-D-muramoyl-L-alanyl-D-glutamate + meso-2,6-diaminopimelate + ATP = UDP-N-acetyl-alpha-D-muramoyl-L-alanyl-gamma-D-glutamyl-meso-2,6-diaminopimelate + ADP + phosphate + H(+)</text>
        <dbReference type="Rhea" id="RHEA:23676"/>
        <dbReference type="ChEBI" id="CHEBI:15378"/>
        <dbReference type="ChEBI" id="CHEBI:30616"/>
        <dbReference type="ChEBI" id="CHEBI:43474"/>
        <dbReference type="ChEBI" id="CHEBI:57791"/>
        <dbReference type="ChEBI" id="CHEBI:83900"/>
        <dbReference type="ChEBI" id="CHEBI:83905"/>
        <dbReference type="ChEBI" id="CHEBI:456216"/>
        <dbReference type="EC" id="6.3.2.13"/>
    </reaction>
</comment>
<comment type="cofactor">
    <cofactor evidence="1">
        <name>Mg(2+)</name>
        <dbReference type="ChEBI" id="CHEBI:18420"/>
    </cofactor>
</comment>
<comment type="pathway">
    <text evidence="1">Cell wall biogenesis; peptidoglycan biosynthesis.</text>
</comment>
<comment type="subcellular location">
    <subcellularLocation>
        <location evidence="1">Cytoplasm</location>
    </subcellularLocation>
</comment>
<comment type="PTM">
    <text evidence="1">Carboxylation is probably crucial for Mg(2+) binding and, consequently, for the gamma-phosphate positioning of ATP.</text>
</comment>
<comment type="similarity">
    <text evidence="1">Belongs to the MurCDEF family. MurE subfamily.</text>
</comment>
<keyword id="KW-0067">ATP-binding</keyword>
<keyword id="KW-0131">Cell cycle</keyword>
<keyword id="KW-0132">Cell division</keyword>
<keyword id="KW-0133">Cell shape</keyword>
<keyword id="KW-0961">Cell wall biogenesis/degradation</keyword>
<keyword id="KW-0963">Cytoplasm</keyword>
<keyword id="KW-0436">Ligase</keyword>
<keyword id="KW-0460">Magnesium</keyword>
<keyword id="KW-0547">Nucleotide-binding</keyword>
<keyword id="KW-0573">Peptidoglycan synthesis</keyword>
<keyword id="KW-1185">Reference proteome</keyword>
<dbReference type="EC" id="6.3.2.13" evidence="1"/>
<dbReference type="EMBL" id="CP000002">
    <property type="protein sequence ID" value="AAU23273.1"/>
    <property type="molecule type" value="Genomic_DNA"/>
</dbReference>
<dbReference type="EMBL" id="AE017333">
    <property type="protein sequence ID" value="AAU40630.1"/>
    <property type="molecule type" value="Genomic_DNA"/>
</dbReference>
<dbReference type="RefSeq" id="WP_011197958.1">
    <property type="nucleotide sequence ID" value="NC_006322.1"/>
</dbReference>
<dbReference type="SMR" id="Q65JY4"/>
<dbReference type="STRING" id="279010.BL02239"/>
<dbReference type="KEGG" id="bld:BLi01735"/>
<dbReference type="KEGG" id="bli:BL02239"/>
<dbReference type="PATRIC" id="fig|279010.13.peg.1735"/>
<dbReference type="eggNOG" id="COG0769">
    <property type="taxonomic scope" value="Bacteria"/>
</dbReference>
<dbReference type="HOGENOM" id="CLU_022291_4_1_9"/>
<dbReference type="UniPathway" id="UPA00219"/>
<dbReference type="Proteomes" id="UP000000606">
    <property type="component" value="Chromosome"/>
</dbReference>
<dbReference type="GO" id="GO:0005737">
    <property type="term" value="C:cytoplasm"/>
    <property type="evidence" value="ECO:0007669"/>
    <property type="project" value="UniProtKB-SubCell"/>
</dbReference>
<dbReference type="GO" id="GO:0005524">
    <property type="term" value="F:ATP binding"/>
    <property type="evidence" value="ECO:0007669"/>
    <property type="project" value="UniProtKB-UniRule"/>
</dbReference>
<dbReference type="GO" id="GO:0000287">
    <property type="term" value="F:magnesium ion binding"/>
    <property type="evidence" value="ECO:0007669"/>
    <property type="project" value="UniProtKB-UniRule"/>
</dbReference>
<dbReference type="GO" id="GO:0008765">
    <property type="term" value="F:UDP-N-acetylmuramoylalanyl-D-glutamate-2,6-diaminopimelate ligase activity"/>
    <property type="evidence" value="ECO:0007669"/>
    <property type="project" value="UniProtKB-UniRule"/>
</dbReference>
<dbReference type="GO" id="GO:0051301">
    <property type="term" value="P:cell division"/>
    <property type="evidence" value="ECO:0007669"/>
    <property type="project" value="UniProtKB-KW"/>
</dbReference>
<dbReference type="GO" id="GO:0071555">
    <property type="term" value="P:cell wall organization"/>
    <property type="evidence" value="ECO:0007669"/>
    <property type="project" value="UniProtKB-KW"/>
</dbReference>
<dbReference type="GO" id="GO:0009252">
    <property type="term" value="P:peptidoglycan biosynthetic process"/>
    <property type="evidence" value="ECO:0007669"/>
    <property type="project" value="UniProtKB-UniRule"/>
</dbReference>
<dbReference type="GO" id="GO:0008360">
    <property type="term" value="P:regulation of cell shape"/>
    <property type="evidence" value="ECO:0007669"/>
    <property type="project" value="UniProtKB-KW"/>
</dbReference>
<dbReference type="FunFam" id="3.40.1390.10:FF:000005">
    <property type="entry name" value="UDP-N-acetylmuramoyl-L-alanyl-D-glutamate--2,6-diaminopimelate ligase"/>
    <property type="match status" value="1"/>
</dbReference>
<dbReference type="FunFam" id="3.90.190.20:FF:000006">
    <property type="entry name" value="UDP-N-acetylmuramoyl-L-alanyl-D-glutamate--2,6-diaminopimelate ligase"/>
    <property type="match status" value="1"/>
</dbReference>
<dbReference type="Gene3D" id="3.90.190.20">
    <property type="entry name" value="Mur ligase, C-terminal domain"/>
    <property type="match status" value="1"/>
</dbReference>
<dbReference type="Gene3D" id="3.40.1190.10">
    <property type="entry name" value="Mur-like, catalytic domain"/>
    <property type="match status" value="1"/>
</dbReference>
<dbReference type="Gene3D" id="3.40.1390.10">
    <property type="entry name" value="MurE/MurF, N-terminal domain"/>
    <property type="match status" value="1"/>
</dbReference>
<dbReference type="HAMAP" id="MF_00208">
    <property type="entry name" value="MurE"/>
    <property type="match status" value="1"/>
</dbReference>
<dbReference type="InterPro" id="IPR036565">
    <property type="entry name" value="Mur-like_cat_sf"/>
</dbReference>
<dbReference type="InterPro" id="IPR004101">
    <property type="entry name" value="Mur_ligase_C"/>
</dbReference>
<dbReference type="InterPro" id="IPR036615">
    <property type="entry name" value="Mur_ligase_C_dom_sf"/>
</dbReference>
<dbReference type="InterPro" id="IPR013221">
    <property type="entry name" value="Mur_ligase_cen"/>
</dbReference>
<dbReference type="InterPro" id="IPR000713">
    <property type="entry name" value="Mur_ligase_N"/>
</dbReference>
<dbReference type="InterPro" id="IPR035911">
    <property type="entry name" value="MurE/MurF_N"/>
</dbReference>
<dbReference type="InterPro" id="IPR005761">
    <property type="entry name" value="UDP-N-AcMur-Glu-dNH2Pim_ligase"/>
</dbReference>
<dbReference type="NCBIfam" id="TIGR01085">
    <property type="entry name" value="murE"/>
    <property type="match status" value="1"/>
</dbReference>
<dbReference type="NCBIfam" id="NF001124">
    <property type="entry name" value="PRK00139.1-2"/>
    <property type="match status" value="1"/>
</dbReference>
<dbReference type="NCBIfam" id="NF001126">
    <property type="entry name" value="PRK00139.1-4"/>
    <property type="match status" value="1"/>
</dbReference>
<dbReference type="PANTHER" id="PTHR23135">
    <property type="entry name" value="MUR LIGASE FAMILY MEMBER"/>
    <property type="match status" value="1"/>
</dbReference>
<dbReference type="PANTHER" id="PTHR23135:SF4">
    <property type="entry name" value="UDP-N-ACETYLMURAMOYL-L-ALANYL-D-GLUTAMATE--2,6-DIAMINOPIMELATE LIGASE MURE HOMOLOG, CHLOROPLASTIC"/>
    <property type="match status" value="1"/>
</dbReference>
<dbReference type="Pfam" id="PF01225">
    <property type="entry name" value="Mur_ligase"/>
    <property type="match status" value="1"/>
</dbReference>
<dbReference type="Pfam" id="PF02875">
    <property type="entry name" value="Mur_ligase_C"/>
    <property type="match status" value="1"/>
</dbReference>
<dbReference type="Pfam" id="PF08245">
    <property type="entry name" value="Mur_ligase_M"/>
    <property type="match status" value="1"/>
</dbReference>
<dbReference type="SUPFAM" id="SSF53623">
    <property type="entry name" value="MurD-like peptide ligases, catalytic domain"/>
    <property type="match status" value="1"/>
</dbReference>
<dbReference type="SUPFAM" id="SSF53244">
    <property type="entry name" value="MurD-like peptide ligases, peptide-binding domain"/>
    <property type="match status" value="1"/>
</dbReference>
<dbReference type="SUPFAM" id="SSF63418">
    <property type="entry name" value="MurE/MurF N-terminal domain"/>
    <property type="match status" value="1"/>
</dbReference>
<evidence type="ECO:0000255" key="1">
    <source>
        <dbReference type="HAMAP-Rule" id="MF_00208"/>
    </source>
</evidence>
<reference key="1">
    <citation type="journal article" date="2004" name="J. Mol. Microbiol. Biotechnol.">
        <title>The complete genome sequence of Bacillus licheniformis DSM13, an organism with great industrial potential.</title>
        <authorList>
            <person name="Veith B."/>
            <person name="Herzberg C."/>
            <person name="Steckel S."/>
            <person name="Feesche J."/>
            <person name="Maurer K.H."/>
            <person name="Ehrenreich P."/>
            <person name="Baeumer S."/>
            <person name="Henne A."/>
            <person name="Liesegang H."/>
            <person name="Merkl R."/>
            <person name="Ehrenreich A."/>
            <person name="Gottschalk G."/>
        </authorList>
    </citation>
    <scope>NUCLEOTIDE SEQUENCE [LARGE SCALE GENOMIC DNA]</scope>
    <source>
        <strain>ATCC 14580 / DSM 13 / JCM 2505 / CCUG 7422 / NBRC 12200 / NCIMB 9375 / NCTC 10341 / NRRL NRS-1264 / Gibson 46</strain>
    </source>
</reference>
<reference key="2">
    <citation type="journal article" date="2004" name="Genome Biol.">
        <title>Complete genome sequence of the industrial bacterium Bacillus licheniformis and comparisons with closely related Bacillus species.</title>
        <authorList>
            <person name="Rey M.W."/>
            <person name="Ramaiya P."/>
            <person name="Nelson B.A."/>
            <person name="Brody-Karpin S.D."/>
            <person name="Zaretsky E.J."/>
            <person name="Tang M."/>
            <person name="Lopez de Leon A."/>
            <person name="Xiang H."/>
            <person name="Gusti V."/>
            <person name="Clausen I.G."/>
            <person name="Olsen P.B."/>
            <person name="Rasmussen M.D."/>
            <person name="Andersen J.T."/>
            <person name="Joergensen P.L."/>
            <person name="Larsen T.S."/>
            <person name="Sorokin A."/>
            <person name="Bolotin A."/>
            <person name="Lapidus A."/>
            <person name="Galleron N."/>
            <person name="Ehrlich S.D."/>
            <person name="Berka R.M."/>
        </authorList>
    </citation>
    <scope>NUCLEOTIDE SEQUENCE [LARGE SCALE GENOMIC DNA]</scope>
    <source>
        <strain>ATCC 14580 / DSM 13 / JCM 2505 / CCUG 7422 / NBRC 12200 / NCIMB 9375 / NCTC 10341 / NRRL NRS-1264 / Gibson 46</strain>
    </source>
</reference>
<organism>
    <name type="scientific">Bacillus licheniformis (strain ATCC 14580 / DSM 13 / JCM 2505 / CCUG 7422 / NBRC 12200 / NCIMB 9375 / NCTC 10341 / NRRL NRS-1264 / Gibson 46)</name>
    <dbReference type="NCBI Taxonomy" id="279010"/>
    <lineage>
        <taxon>Bacteria</taxon>
        <taxon>Bacillati</taxon>
        <taxon>Bacillota</taxon>
        <taxon>Bacilli</taxon>
        <taxon>Bacillales</taxon>
        <taxon>Bacillaceae</taxon>
        <taxon>Bacillus</taxon>
    </lineage>
</organism>
<proteinExistence type="inferred from homology"/>
<gene>
    <name evidence="1" type="primary">murE</name>
    <name type="ordered locus">BLi01735</name>
    <name type="ordered locus">BL02239</name>
</gene>